<organism>
    <name type="scientific">Mus musculus</name>
    <name type="common">Mouse</name>
    <dbReference type="NCBI Taxonomy" id="10090"/>
    <lineage>
        <taxon>Eukaryota</taxon>
        <taxon>Metazoa</taxon>
        <taxon>Chordata</taxon>
        <taxon>Craniata</taxon>
        <taxon>Vertebrata</taxon>
        <taxon>Euteleostomi</taxon>
        <taxon>Mammalia</taxon>
        <taxon>Eutheria</taxon>
        <taxon>Euarchontoglires</taxon>
        <taxon>Glires</taxon>
        <taxon>Rodentia</taxon>
        <taxon>Myomorpha</taxon>
        <taxon>Muroidea</taxon>
        <taxon>Muridae</taxon>
        <taxon>Murinae</taxon>
        <taxon>Mus</taxon>
        <taxon>Mus</taxon>
    </lineage>
</organism>
<proteinExistence type="evidence at protein level"/>
<evidence type="ECO:0000250" key="1">
    <source>
        <dbReference type="UniProtKB" id="Q1W6C3"/>
    </source>
</evidence>
<evidence type="ECO:0000255" key="2"/>
<evidence type="ECO:0000269" key="3">
    <source>
    </source>
</evidence>
<evidence type="ECO:0000269" key="4">
    <source>
    </source>
</evidence>
<evidence type="ECO:0000269" key="5">
    <source>
    </source>
</evidence>
<evidence type="ECO:0000269" key="6">
    <source>
    </source>
</evidence>
<evidence type="ECO:0000269" key="7">
    <source>
    </source>
</evidence>
<evidence type="ECO:0000269" key="8">
    <source>
    </source>
</evidence>
<evidence type="ECO:0000269" key="9">
    <source>
    </source>
</evidence>
<evidence type="ECO:0000269" key="10">
    <source>
    </source>
</evidence>
<evidence type="ECO:0000305" key="11"/>
<evidence type="ECO:0007744" key="12">
    <source>
        <dbReference type="PDB" id="8I7O"/>
    </source>
</evidence>
<evidence type="ECO:0007744" key="13">
    <source>
        <dbReference type="PDB" id="8I7R"/>
    </source>
</evidence>
<evidence type="ECO:0007744" key="14">
    <source>
        <dbReference type="PDB" id="8IYJ"/>
    </source>
</evidence>
<evidence type="ECO:0007744" key="15">
    <source>
        <dbReference type="PDB" id="8TO0"/>
    </source>
</evidence>
<sequence length="430" mass="50311">MATLSFKPSERYRLSDWRTNSYLLSTNAERQRDASHQIRQEARILRNETNNQIVWDEHDNRTRLAERIDTVNRWKETLDKCLTDLDAEIDSLAQAKESAEQNLQAKNLPLDVAIECLTLRESRRDIDVVRDPVEEELLKEVEVIEATKKVLQEKISQAFQHLCLLQEIRQQLNSDHRDKMETLEIDRGCLSLNLTSPNISLKVNPTRIPKDSTTLQQWDEFTRFNKNRAEAEMKASIELREAIALAIAQTNNELDAQRVATEFTFRKRLREMESFYSELKWQEKNTLEEIAELQGDIRRLEEDLRRKMMNLKLAHTRLESRTYRSNVELCRDQTQYGLIDEVHQLEATINTMKQKLAQTQNALDALFKHLARIQADIACKTNTLLLDTKCMDTRRKLTVPAEKFVPQVDTFTRTTNRTLSPLKICQLELT</sequence>
<gene>
    <name type="primary">Tekt2</name>
</gene>
<dbReference type="EMBL" id="AB027138">
    <property type="protein sequence ID" value="BAA81822.1"/>
    <property type="molecule type" value="mRNA"/>
</dbReference>
<dbReference type="EMBL" id="BC008140">
    <property type="protein sequence ID" value="AAH08140.1"/>
    <property type="molecule type" value="mRNA"/>
</dbReference>
<dbReference type="CCDS" id="CCDS18651.1"/>
<dbReference type="RefSeq" id="NP_001344191.1">
    <property type="nucleotide sequence ID" value="NM_001357262.1"/>
</dbReference>
<dbReference type="RefSeq" id="NP_001344192.1">
    <property type="nucleotide sequence ID" value="NM_001357263.1"/>
</dbReference>
<dbReference type="RefSeq" id="NP_036032.2">
    <property type="nucleotide sequence ID" value="NM_011902.3"/>
</dbReference>
<dbReference type="RefSeq" id="XP_017175679.1">
    <property type="nucleotide sequence ID" value="XM_017320190.1"/>
</dbReference>
<dbReference type="RefSeq" id="XP_017175680.1">
    <property type="nucleotide sequence ID" value="XM_017320191.1"/>
</dbReference>
<dbReference type="RefSeq" id="XP_017175681.1">
    <property type="nucleotide sequence ID" value="XM_017320192.1"/>
</dbReference>
<dbReference type="PDB" id="8I7O">
    <property type="method" value="EM"/>
    <property type="resolution" value="4.50 A"/>
    <property type="chains" value="B2/B3/B7/B8=1-430"/>
</dbReference>
<dbReference type="PDB" id="8I7R">
    <property type="method" value="EM"/>
    <property type="resolution" value="6.50 A"/>
    <property type="chains" value="B1/B2/B3/B4/B5/B6/B7/B8/B9=1-430"/>
</dbReference>
<dbReference type="PDB" id="8IYJ">
    <property type="method" value="EM"/>
    <property type="resolution" value="3.50 A"/>
    <property type="chains" value="B0/B1/B2/B3/B4/B5/R0/R1/R2/R3/R4/R5=1-430"/>
</dbReference>
<dbReference type="PDB" id="8TO0">
    <property type="method" value="EM"/>
    <property type="resolution" value="7.70 A"/>
    <property type="chains" value="b/e/f/g/h/i/j/k/l/m=1-430"/>
</dbReference>
<dbReference type="PDBsum" id="8I7O"/>
<dbReference type="PDBsum" id="8I7R"/>
<dbReference type="PDBsum" id="8IYJ"/>
<dbReference type="PDBsum" id="8TO0"/>
<dbReference type="EMDB" id="EMD-35229"/>
<dbReference type="EMDB" id="EMD-35230"/>
<dbReference type="EMDB" id="EMD-35823"/>
<dbReference type="EMDB" id="EMD-41431"/>
<dbReference type="SMR" id="Q922G7"/>
<dbReference type="BioGRID" id="204892">
    <property type="interactions" value="1"/>
</dbReference>
<dbReference type="FunCoup" id="Q922G7">
    <property type="interactions" value="121"/>
</dbReference>
<dbReference type="STRING" id="10090.ENSMUSP00000099676"/>
<dbReference type="iPTMnet" id="Q922G7"/>
<dbReference type="PhosphoSitePlus" id="Q922G7"/>
<dbReference type="SwissPalm" id="Q922G7"/>
<dbReference type="PaxDb" id="10090-ENSMUSP00000099676"/>
<dbReference type="ProteomicsDB" id="262865"/>
<dbReference type="Antibodypedia" id="17404">
    <property type="antibodies" value="148 antibodies from 22 providers"/>
</dbReference>
<dbReference type="DNASU" id="24084"/>
<dbReference type="Ensembl" id="ENSMUST00000030658.13">
    <property type="protein sequence ID" value="ENSMUSP00000030658.7"/>
    <property type="gene ID" value="ENSMUSG00000028845.16"/>
</dbReference>
<dbReference type="Ensembl" id="ENSMUST00000102616.8">
    <property type="protein sequence ID" value="ENSMUSP00000099676.2"/>
    <property type="gene ID" value="ENSMUSG00000028845.16"/>
</dbReference>
<dbReference type="GeneID" id="24084"/>
<dbReference type="KEGG" id="mmu:24084"/>
<dbReference type="UCSC" id="uc008utf.1">
    <property type="organism name" value="mouse"/>
</dbReference>
<dbReference type="AGR" id="MGI:1346335"/>
<dbReference type="CTD" id="27285"/>
<dbReference type="MGI" id="MGI:1346335">
    <property type="gene designation" value="Tekt2"/>
</dbReference>
<dbReference type="VEuPathDB" id="HostDB:ENSMUSG00000028845"/>
<dbReference type="eggNOG" id="KOG2685">
    <property type="taxonomic scope" value="Eukaryota"/>
</dbReference>
<dbReference type="GeneTree" id="ENSGT00950000182894"/>
<dbReference type="HOGENOM" id="CLU_033588_0_0_1"/>
<dbReference type="InParanoid" id="Q922G7"/>
<dbReference type="OMA" id="FDHRGKM"/>
<dbReference type="OrthoDB" id="440745at2759"/>
<dbReference type="PhylomeDB" id="Q922G7"/>
<dbReference type="TreeFam" id="TF320754"/>
<dbReference type="BioGRID-ORCS" id="24084">
    <property type="hits" value="4 hits in 78 CRISPR screens"/>
</dbReference>
<dbReference type="CD-CODE" id="01CA17F3">
    <property type="entry name" value="Centrosome"/>
</dbReference>
<dbReference type="CD-CODE" id="DE1E139C">
    <property type="entry name" value="Chromatoid body"/>
</dbReference>
<dbReference type="PRO" id="PR:Q922G7"/>
<dbReference type="Proteomes" id="UP000000589">
    <property type="component" value="Chromosome 4"/>
</dbReference>
<dbReference type="RNAct" id="Q922G7">
    <property type="molecule type" value="protein"/>
</dbReference>
<dbReference type="Bgee" id="ENSMUSG00000028845">
    <property type="expression patterns" value="Expressed in testis and 64 other cell types or tissues"/>
</dbReference>
<dbReference type="ExpressionAtlas" id="Q922G7">
    <property type="expression patterns" value="baseline and differential"/>
</dbReference>
<dbReference type="GO" id="GO:0160111">
    <property type="term" value="C:axonemal A tubule inner sheath"/>
    <property type="evidence" value="ECO:0000314"/>
    <property type="project" value="UniProtKB"/>
</dbReference>
<dbReference type="GO" id="GO:0005879">
    <property type="term" value="C:axonemal microtubule"/>
    <property type="evidence" value="ECO:0000250"/>
    <property type="project" value="UniProtKB"/>
</dbReference>
<dbReference type="GO" id="GO:0005815">
    <property type="term" value="C:microtubule organizing center"/>
    <property type="evidence" value="ECO:0000314"/>
    <property type="project" value="UniProtKB"/>
</dbReference>
<dbReference type="GO" id="GO:0036126">
    <property type="term" value="C:sperm flagellum"/>
    <property type="evidence" value="ECO:0000314"/>
    <property type="project" value="UniProtKB"/>
</dbReference>
<dbReference type="GO" id="GO:0030317">
    <property type="term" value="P:flagellated sperm motility"/>
    <property type="evidence" value="ECO:0000314"/>
    <property type="project" value="UniProtKB"/>
</dbReference>
<dbReference type="GO" id="GO:0036159">
    <property type="term" value="P:inner dynein arm assembly"/>
    <property type="evidence" value="ECO:0000315"/>
    <property type="project" value="MGI"/>
</dbReference>
<dbReference type="InterPro" id="IPR048256">
    <property type="entry name" value="Tektin-like"/>
</dbReference>
<dbReference type="InterPro" id="IPR000435">
    <property type="entry name" value="Tektins"/>
</dbReference>
<dbReference type="PANTHER" id="PTHR19960">
    <property type="entry name" value="TEKTIN"/>
    <property type="match status" value="1"/>
</dbReference>
<dbReference type="PANTHER" id="PTHR19960:SF29">
    <property type="entry name" value="TEKTIN-2"/>
    <property type="match status" value="1"/>
</dbReference>
<dbReference type="Pfam" id="PF03148">
    <property type="entry name" value="Tektin"/>
    <property type="match status" value="1"/>
</dbReference>
<dbReference type="PRINTS" id="PR00511">
    <property type="entry name" value="TEKTIN"/>
</dbReference>
<accession>Q922G7</accession>
<accession>Q9WVR0</accession>
<name>TEKT2_MOUSE</name>
<comment type="function">
    <text evidence="4 8 9 10">Microtubule inner protein (MIP) part of the dynein-decorated doublet microtubules (DMTs) in cilia and flagellar axoneme (PubMed:15340058, PubMed:37295417, PubMed:37865089, PubMed:37989994). Plays a key role in the assembly or attachment of the inner dynein arm to microtubules in sperm flagella and tracheal cilia (PubMed:15340058). Forms filamentous polymers in the walls of ciliary and flagellar microtubules (PubMed:15340058).</text>
</comment>
<comment type="subunit">
    <text evidence="5 8 9 10">Microtubule inner protein component of sperm flagellar doublet microtubules (PubMed:37295417, PubMed:37865089, PubMed:37989994). May interact with CCDC172 (PubMed:24394471).</text>
</comment>
<comment type="subcellular location">
    <subcellularLocation>
        <location evidence="4">Cytoplasm</location>
        <location evidence="4">Cytoskeleton</location>
        <location evidence="4">Cilium axoneme</location>
    </subcellularLocation>
    <subcellularLocation>
        <location evidence="3 8 9 10">Cytoplasm</location>
        <location evidence="3 8 9 10">Cytoskeleton</location>
        <location evidence="3 8 9 10">Flagellum axoneme</location>
    </subcellularLocation>
    <subcellularLocation>
        <location evidence="5">Cytoplasm</location>
        <location evidence="5">Cytoskeleton</location>
        <location evidence="5">Microtubule organizing center</location>
    </subcellularLocation>
    <text evidence="5">Colocalized with CCDC172 at the perinuclear region (PubMed:24394471).</text>
</comment>
<comment type="tissue specificity">
    <text evidence="3 6">Expressed in the testes (at protein level).</text>
</comment>
<comment type="developmental stage">
    <text evidence="3">Localized in the flagella of elongating spermatids from developmental step 15 to maturity.</text>
</comment>
<comment type="PTM">
    <text evidence="7">Ubiquitinated, leading to its degradation. Deubiquitinated by USP16, promoting its stability.</text>
</comment>
<comment type="PTM">
    <text evidence="1">Tyrosine phosphorylated.</text>
</comment>
<comment type="similarity">
    <text evidence="11">Belongs to the tektin family.</text>
</comment>
<reference key="1">
    <citation type="journal article" date="1999" name="FEBS Lett.">
        <title>Molecular cloning of haploid germ cell-specific tektin cDNA and analysis of the protein in mouse testis.</title>
        <authorList>
            <person name="Iguchi N."/>
            <person name="Tanaka H."/>
            <person name="Fujii T."/>
            <person name="Tamura K."/>
            <person name="Kaneko Y."/>
            <person name="Nojima H."/>
            <person name="Nishimune Y."/>
        </authorList>
    </citation>
    <scope>NUCLEOTIDE SEQUENCE [MRNA]</scope>
    <scope>DEVELOPMENTAL STAGE</scope>
    <scope>TISSUE SPECIFICITY</scope>
    <scope>SUBCELLULAR LOCATION</scope>
    <source>
        <tissue>Testis</tissue>
    </source>
</reference>
<reference key="2">
    <citation type="journal article" date="2004" name="Genome Res.">
        <title>The status, quality, and expansion of the NIH full-length cDNA project: the Mammalian Gene Collection (MGC).</title>
        <authorList>
            <consortium name="The MGC Project Team"/>
        </authorList>
    </citation>
    <scope>NUCLEOTIDE SEQUENCE [LARGE SCALE MRNA]</scope>
</reference>
<reference key="3">
    <citation type="journal article" date="2004" name="Mol. Cell. Biol.">
        <title>Mice deficient in the axonemal protein tektin-t exhibit male infertility and immotile-cilium syndrome due to impaired inner arm dynein function.</title>
        <authorList>
            <person name="Tanaka H."/>
            <person name="Iguchi N."/>
            <person name="Toyama Y."/>
            <person name="Kitamura K."/>
            <person name="Takahashi T."/>
            <person name="Kaseda K."/>
            <person name="Maekawa M."/>
            <person name="Nishimune Y."/>
        </authorList>
    </citation>
    <scope>FUNCTION</scope>
    <scope>SUBCELLULAR LOCATION</scope>
</reference>
<reference key="4">
    <citation type="journal article" date="2010" name="Cell">
        <title>A tissue-specific atlas of mouse protein phosphorylation and expression.</title>
        <authorList>
            <person name="Huttlin E.L."/>
            <person name="Jedrychowski M.P."/>
            <person name="Elias J.E."/>
            <person name="Goswami T."/>
            <person name="Rad R."/>
            <person name="Beausoleil S.A."/>
            <person name="Villen J."/>
            <person name="Haas W."/>
            <person name="Sowa M.E."/>
            <person name="Gygi S.P."/>
        </authorList>
    </citation>
    <scope>IDENTIFICATION BY MASS SPECTROMETRY [LARGE SCALE ANALYSIS]</scope>
    <source>
        <tissue>Testis</tissue>
    </source>
</reference>
<reference key="5">
    <citation type="journal article" date="2014" name="J. Histochem. Cytochem.">
        <title>Molecular cloning and subcellular localization of Tektin2-binding protein 1 (Ccdc 172) in rat spermatozoa.</title>
        <authorList>
            <person name="Yamaguchi A."/>
            <person name="Kaneko T."/>
            <person name="Inai T."/>
            <person name="Iida H."/>
        </authorList>
    </citation>
    <scope>SUBCELLULAR LOCATION</scope>
    <scope>INTERACTION WITH CCDC172</scope>
</reference>
<reference key="6">
    <citation type="journal article" date="2022" name="Front. Cell Dev. Biol.">
        <title>TMPRSS12 Functions in Meiosis and Spermiogenesis and Is Required for Male Fertility in Mice.</title>
        <authorList>
            <person name="Zhang J."/>
            <person name="Zhou X."/>
            <person name="Wan D."/>
            <person name="Yu L."/>
            <person name="Chen X."/>
            <person name="Yan T."/>
            <person name="Wu Z."/>
            <person name="Zheng M."/>
            <person name="Zhu F."/>
            <person name="Zhu H."/>
        </authorList>
    </citation>
    <scope>TISSUE SPECIFICITY</scope>
</reference>
<reference key="7">
    <citation type="journal article" date="2022" name="Sci. Adv.">
        <title>Loss-of-function mutations in CEP78 cause male infertility in humans and mice.</title>
        <authorList>
            <person name="Zhang X."/>
            <person name="Zheng R."/>
            <person name="Liang C."/>
            <person name="Liu H."/>
            <person name="Zhang X."/>
            <person name="Ma Y."/>
            <person name="Liu M."/>
            <person name="Zhang W."/>
            <person name="Yang Y."/>
            <person name="Liu M."/>
            <person name="Jiang C."/>
            <person name="Ren Q."/>
            <person name="Wang Y."/>
            <person name="Chen S."/>
            <person name="Yang Y."/>
            <person name="Shen Y."/>
        </authorList>
    </citation>
    <scope>UBIQUITINATION</scope>
    <scope>DEUBIQUITINATION</scope>
</reference>
<reference evidence="14" key="8">
    <citation type="journal article" date="2023" name="Cell">
        <title>Structures of sperm flagellar doublet microtubules expand the genetic spectrum of male infertility.</title>
        <authorList>
            <person name="Zhou L."/>
            <person name="Liu H."/>
            <person name="Liu S."/>
            <person name="Yang X."/>
            <person name="Dong Y."/>
            <person name="Pan Y."/>
            <person name="Xiao Z."/>
            <person name="Zheng B."/>
            <person name="Sun Y."/>
            <person name="Huang P."/>
            <person name="Zhang X."/>
            <person name="Hu J."/>
            <person name="Sun R."/>
            <person name="Feng S."/>
            <person name="Zhu Y."/>
            <person name="Liu M."/>
            <person name="Gui M."/>
            <person name="Wu J."/>
        </authorList>
    </citation>
    <scope>STRUCTURE BY ELECTRON MICROSCOPY (3.50 ANGSTROMS) OF SPERM FLAGELLAR DOUBLET MICROTUBULES</scope>
    <scope>FUNCTION</scope>
    <scope>SUBCELLULAR LOCATION</scope>
    <scope>SUBUNIT</scope>
</reference>
<reference evidence="15" key="9">
    <citation type="journal article" date="2023" name="Cell">
        <title>De novo protein identification in mammalian sperm using in situ cryoelectron tomography and AlphaFold2 docking.</title>
        <authorList>
            <person name="Chen Z."/>
            <person name="Shiozaki M."/>
            <person name="Haas K.M."/>
            <person name="Skinner W.M."/>
            <person name="Zhao S."/>
            <person name="Guo C."/>
            <person name="Polacco B.J."/>
            <person name="Yu Z."/>
            <person name="Krogan N.J."/>
            <person name="Lishko P.V."/>
            <person name="Kaake R.M."/>
            <person name="Vale R.D."/>
            <person name="Agard D.A."/>
        </authorList>
    </citation>
    <scope>STRUCTURE BY ELECTRON MICROSCOPY (7.70 ANGSTROMS) OF SPERM FLAGELLAR DOUBLET MICROTUBULES</scope>
    <scope>FUNCTION</scope>
    <scope>SUBCELLULAR LOCATION</scope>
    <scope>SUBUNIT</scope>
</reference>
<reference evidence="12 13" key="10">
    <citation type="journal article" date="2023" name="Cell Discov.">
        <title>In-cell structural insight into the stability of sperm microtubule doublet.</title>
        <authorList>
            <person name="Tai L."/>
            <person name="Yin G."/>
            <person name="Huang X."/>
            <person name="Sun F."/>
            <person name="Zhu Y."/>
        </authorList>
    </citation>
    <scope>STRUCTURE BY ELECTRON MICROSCOPY (4.50 ANGSTROMS)</scope>
    <scope>FUNCTION</scope>
    <scope>SUBUNIT</scope>
    <scope>SUBCELLULAR LOCATION</scope>
</reference>
<keyword id="KW-0002">3D-structure</keyword>
<keyword id="KW-0966">Cell projection</keyword>
<keyword id="KW-0969">Cilium</keyword>
<keyword id="KW-0970">Cilium biogenesis/degradation</keyword>
<keyword id="KW-0175">Coiled coil</keyword>
<keyword id="KW-0963">Cytoplasm</keyword>
<keyword id="KW-0206">Cytoskeleton</keyword>
<keyword id="KW-0282">Flagellum</keyword>
<keyword id="KW-0493">Microtubule</keyword>
<keyword id="KW-0597">Phosphoprotein</keyword>
<keyword id="KW-1185">Reference proteome</keyword>
<keyword id="KW-0832">Ubl conjugation</keyword>
<feature type="chain" id="PRO_0000184566" description="Tektin-2">
    <location>
        <begin position="1"/>
        <end position="430"/>
    </location>
</feature>
<feature type="coiled-coil region" evidence="2">
    <location>
        <begin position="75"/>
        <end position="162"/>
    </location>
</feature>
<feature type="coiled-coil region" evidence="2">
    <location>
        <begin position="226"/>
        <end position="380"/>
    </location>
</feature>
<feature type="sequence conflict" description="In Ref. 1; BAA81822." evidence="11" ref="1">
    <original>R</original>
    <variation>Q</variation>
    <location>
        <position position="32"/>
    </location>
</feature>
<protein>
    <recommendedName>
        <fullName>Tektin-2</fullName>
    </recommendedName>
    <alternativeName>
        <fullName>Tektin-t</fullName>
    </alternativeName>
    <alternativeName>
        <fullName>Testicular tektin</fullName>
    </alternativeName>
</protein>